<reference key="1">
    <citation type="journal article" date="2011" name="J. Bacteriol.">
        <title>Comparative genomics of 28 Salmonella enterica isolates: evidence for CRISPR-mediated adaptive sublineage evolution.</title>
        <authorList>
            <person name="Fricke W.F."/>
            <person name="Mammel M.K."/>
            <person name="McDermott P.F."/>
            <person name="Tartera C."/>
            <person name="White D.G."/>
            <person name="Leclerc J.E."/>
            <person name="Ravel J."/>
            <person name="Cebula T.A."/>
        </authorList>
    </citation>
    <scope>NUCLEOTIDE SEQUENCE [LARGE SCALE GENOMIC DNA]</scope>
    <source>
        <strain>SL254</strain>
    </source>
</reference>
<dbReference type="EC" id="3.5.3.23" evidence="1"/>
<dbReference type="EMBL" id="CP001113">
    <property type="protein sequence ID" value="ACF62695.1"/>
    <property type="molecule type" value="Genomic_DNA"/>
</dbReference>
<dbReference type="RefSeq" id="WP_000123949.1">
    <property type="nucleotide sequence ID" value="NZ_CCMR01000003.1"/>
</dbReference>
<dbReference type="SMR" id="B4T3Z7"/>
<dbReference type="KEGG" id="see:SNSL254_A1418"/>
<dbReference type="HOGENOM" id="CLU_053835_0_0_6"/>
<dbReference type="UniPathway" id="UPA00185">
    <property type="reaction ID" value="UER00280"/>
</dbReference>
<dbReference type="Proteomes" id="UP000008824">
    <property type="component" value="Chromosome"/>
</dbReference>
<dbReference type="GO" id="GO:0009015">
    <property type="term" value="F:N-succinylarginine dihydrolase activity"/>
    <property type="evidence" value="ECO:0007669"/>
    <property type="project" value="UniProtKB-UniRule"/>
</dbReference>
<dbReference type="GO" id="GO:0019544">
    <property type="term" value="P:arginine catabolic process to glutamate"/>
    <property type="evidence" value="ECO:0007669"/>
    <property type="project" value="UniProtKB-UniRule"/>
</dbReference>
<dbReference type="GO" id="GO:0019545">
    <property type="term" value="P:arginine catabolic process to succinate"/>
    <property type="evidence" value="ECO:0007669"/>
    <property type="project" value="UniProtKB-UniRule"/>
</dbReference>
<dbReference type="FunFam" id="3.75.10.20:FF:000001">
    <property type="entry name" value="N-succinylarginine dihydrolase"/>
    <property type="match status" value="1"/>
</dbReference>
<dbReference type="Gene3D" id="3.75.10.20">
    <property type="entry name" value="Succinylarginine dihydrolase"/>
    <property type="match status" value="1"/>
</dbReference>
<dbReference type="HAMAP" id="MF_01172">
    <property type="entry name" value="AstB"/>
    <property type="match status" value="1"/>
</dbReference>
<dbReference type="InterPro" id="IPR037031">
    <property type="entry name" value="AstB_sf"/>
</dbReference>
<dbReference type="InterPro" id="IPR007079">
    <property type="entry name" value="SuccinylArg_d-Hdrlase_AstB"/>
</dbReference>
<dbReference type="NCBIfam" id="TIGR03241">
    <property type="entry name" value="arg_catab_astB"/>
    <property type="match status" value="1"/>
</dbReference>
<dbReference type="NCBIfam" id="NF009789">
    <property type="entry name" value="PRK13281.1"/>
    <property type="match status" value="1"/>
</dbReference>
<dbReference type="PANTHER" id="PTHR30420">
    <property type="entry name" value="N-SUCCINYLARGININE DIHYDROLASE"/>
    <property type="match status" value="1"/>
</dbReference>
<dbReference type="PANTHER" id="PTHR30420:SF2">
    <property type="entry name" value="N-SUCCINYLARGININE DIHYDROLASE"/>
    <property type="match status" value="1"/>
</dbReference>
<dbReference type="Pfam" id="PF04996">
    <property type="entry name" value="AstB"/>
    <property type="match status" value="1"/>
</dbReference>
<dbReference type="SUPFAM" id="SSF55909">
    <property type="entry name" value="Pentein"/>
    <property type="match status" value="1"/>
</dbReference>
<proteinExistence type="inferred from homology"/>
<organism>
    <name type="scientific">Salmonella newport (strain SL254)</name>
    <dbReference type="NCBI Taxonomy" id="423368"/>
    <lineage>
        <taxon>Bacteria</taxon>
        <taxon>Pseudomonadati</taxon>
        <taxon>Pseudomonadota</taxon>
        <taxon>Gammaproteobacteria</taxon>
        <taxon>Enterobacterales</taxon>
        <taxon>Enterobacteriaceae</taxon>
        <taxon>Salmonella</taxon>
    </lineage>
</organism>
<accession>B4T3Z7</accession>
<gene>
    <name evidence="1" type="primary">astB</name>
    <name type="ordered locus">SNSL254_A1418</name>
</gene>
<comment type="function">
    <text evidence="1">Catalyzes the hydrolysis of N(2)-succinylarginine into N(2)-succinylornithine, ammonia and CO(2).</text>
</comment>
<comment type="catalytic activity">
    <reaction evidence="1">
        <text>N(2)-succinyl-L-arginine + 2 H2O + 2 H(+) = N(2)-succinyl-L-ornithine + 2 NH4(+) + CO2</text>
        <dbReference type="Rhea" id="RHEA:19533"/>
        <dbReference type="ChEBI" id="CHEBI:15377"/>
        <dbReference type="ChEBI" id="CHEBI:15378"/>
        <dbReference type="ChEBI" id="CHEBI:16526"/>
        <dbReference type="ChEBI" id="CHEBI:28938"/>
        <dbReference type="ChEBI" id="CHEBI:58241"/>
        <dbReference type="ChEBI" id="CHEBI:58514"/>
        <dbReference type="EC" id="3.5.3.23"/>
    </reaction>
</comment>
<comment type="pathway">
    <text evidence="1">Amino-acid degradation; L-arginine degradation via AST pathway; L-glutamate and succinate from L-arginine: step 2/5.</text>
</comment>
<comment type="subunit">
    <text evidence="1">Homodimer.</text>
</comment>
<comment type="similarity">
    <text evidence="1">Belongs to the succinylarginine dihydrolase family.</text>
</comment>
<name>ASTB_SALNS</name>
<evidence type="ECO:0000255" key="1">
    <source>
        <dbReference type="HAMAP-Rule" id="MF_01172"/>
    </source>
</evidence>
<protein>
    <recommendedName>
        <fullName evidence="1">N-succinylarginine dihydrolase</fullName>
        <ecNumber evidence="1">3.5.3.23</ecNumber>
    </recommendedName>
</protein>
<keyword id="KW-0056">Arginine metabolism</keyword>
<keyword id="KW-0378">Hydrolase</keyword>
<feature type="chain" id="PRO_1000138026" description="N-succinylarginine dihydrolase">
    <location>
        <begin position="1"/>
        <end position="447"/>
    </location>
</feature>
<feature type="active site" evidence="1">
    <location>
        <position position="174"/>
    </location>
</feature>
<feature type="active site" evidence="1">
    <location>
        <position position="248"/>
    </location>
</feature>
<feature type="active site" description="Nucleophile" evidence="1">
    <location>
        <position position="365"/>
    </location>
</feature>
<feature type="binding site" evidence="1">
    <location>
        <begin position="19"/>
        <end position="28"/>
    </location>
    <ligand>
        <name>substrate</name>
    </ligand>
</feature>
<feature type="binding site" evidence="1">
    <location>
        <position position="110"/>
    </location>
    <ligand>
        <name>substrate</name>
    </ligand>
</feature>
<feature type="binding site" evidence="1">
    <location>
        <begin position="137"/>
        <end position="138"/>
    </location>
    <ligand>
        <name>substrate</name>
    </ligand>
</feature>
<feature type="binding site" evidence="1">
    <location>
        <position position="212"/>
    </location>
    <ligand>
        <name>substrate</name>
    </ligand>
</feature>
<feature type="binding site" evidence="1">
    <location>
        <position position="250"/>
    </location>
    <ligand>
        <name>substrate</name>
    </ligand>
</feature>
<feature type="binding site" evidence="1">
    <location>
        <position position="359"/>
    </location>
    <ligand>
        <name>substrate</name>
    </ligand>
</feature>
<sequence length="447" mass="49167">MTAHEVNFDGLVGLTHHYAGLSFGNEASTRHRFQVSNPRLAVKQGLLKMKALADAGFPQAVIPPHERPFIPALRQLGFTGSDEQILDKVARQAPRWLSSVSSASPMWVANAATVCPSADALDGKVHLTVANLNNKFHRALEAPVTEALLRAIFRDESQFSVHSALPQVALLGDEGAANHNRLGGEYGSAGVQLFVYGREEENEIRPARYPARQSREASEAVARLNQVNPQQVIFAQQNPEVIDQGVFHNDVIAVSNRQVLFCHEAAFARQKVLINQLRTRVDGFMAIEVPAGEVSVSDAVATYLFNSQLLSRDDGSMLLVLPRECQDHVGVWRYLNKLVAEDNPISAMQVFDLRESMANGGGPACLRLRVVLTEEERRAVNPAVMMNDALFTALNAWADRYYRDRLTAADLADPLLLREGREALDVLTRLLDLGSVYPFQQTGAADG</sequence>